<dbReference type="EC" id="2.8.1.6" evidence="1"/>
<dbReference type="EMBL" id="AE014299">
    <property type="protein sequence ID" value="AAN55768.1"/>
    <property type="molecule type" value="Genomic_DNA"/>
</dbReference>
<dbReference type="RefSeq" id="NP_718324.1">
    <property type="nucleotide sequence ID" value="NC_004347.2"/>
</dbReference>
<dbReference type="RefSeq" id="WP_011072679.1">
    <property type="nucleotide sequence ID" value="NC_004347.2"/>
</dbReference>
<dbReference type="SMR" id="Q8EDK6"/>
<dbReference type="STRING" id="211586.SO_2740"/>
<dbReference type="PaxDb" id="211586-SO_2740"/>
<dbReference type="KEGG" id="son:SO_2740"/>
<dbReference type="PATRIC" id="fig|211586.12.peg.2639"/>
<dbReference type="eggNOG" id="COG0502">
    <property type="taxonomic scope" value="Bacteria"/>
</dbReference>
<dbReference type="HOGENOM" id="CLU_033172_1_2_6"/>
<dbReference type="OrthoDB" id="9786826at2"/>
<dbReference type="PhylomeDB" id="Q8EDK6"/>
<dbReference type="BioCyc" id="SONE211586:G1GMP-2519-MONOMER"/>
<dbReference type="UniPathway" id="UPA00078">
    <property type="reaction ID" value="UER00162"/>
</dbReference>
<dbReference type="Proteomes" id="UP000008186">
    <property type="component" value="Chromosome"/>
</dbReference>
<dbReference type="GO" id="GO:0051537">
    <property type="term" value="F:2 iron, 2 sulfur cluster binding"/>
    <property type="evidence" value="ECO:0000318"/>
    <property type="project" value="GO_Central"/>
</dbReference>
<dbReference type="GO" id="GO:0051539">
    <property type="term" value="F:4 iron, 4 sulfur cluster binding"/>
    <property type="evidence" value="ECO:0007669"/>
    <property type="project" value="UniProtKB-KW"/>
</dbReference>
<dbReference type="GO" id="GO:0004076">
    <property type="term" value="F:biotin synthase activity"/>
    <property type="evidence" value="ECO:0000318"/>
    <property type="project" value="GO_Central"/>
</dbReference>
<dbReference type="GO" id="GO:0005506">
    <property type="term" value="F:iron ion binding"/>
    <property type="evidence" value="ECO:0007669"/>
    <property type="project" value="UniProtKB-UniRule"/>
</dbReference>
<dbReference type="GO" id="GO:0009102">
    <property type="term" value="P:biotin biosynthetic process"/>
    <property type="evidence" value="ECO:0000318"/>
    <property type="project" value="GO_Central"/>
</dbReference>
<dbReference type="CDD" id="cd01335">
    <property type="entry name" value="Radical_SAM"/>
    <property type="match status" value="1"/>
</dbReference>
<dbReference type="FunFam" id="3.20.20.70:FF:000011">
    <property type="entry name" value="Biotin synthase"/>
    <property type="match status" value="1"/>
</dbReference>
<dbReference type="Gene3D" id="3.20.20.70">
    <property type="entry name" value="Aldolase class I"/>
    <property type="match status" value="1"/>
</dbReference>
<dbReference type="HAMAP" id="MF_01694">
    <property type="entry name" value="BioB"/>
    <property type="match status" value="1"/>
</dbReference>
<dbReference type="InterPro" id="IPR013785">
    <property type="entry name" value="Aldolase_TIM"/>
</dbReference>
<dbReference type="InterPro" id="IPR010722">
    <property type="entry name" value="BATS_dom"/>
</dbReference>
<dbReference type="InterPro" id="IPR002684">
    <property type="entry name" value="Biotin_synth/BioAB"/>
</dbReference>
<dbReference type="InterPro" id="IPR024177">
    <property type="entry name" value="Biotin_synthase"/>
</dbReference>
<dbReference type="InterPro" id="IPR006638">
    <property type="entry name" value="Elp3/MiaA/NifB-like_rSAM"/>
</dbReference>
<dbReference type="InterPro" id="IPR007197">
    <property type="entry name" value="rSAM"/>
</dbReference>
<dbReference type="NCBIfam" id="TIGR00433">
    <property type="entry name" value="bioB"/>
    <property type="match status" value="1"/>
</dbReference>
<dbReference type="PANTHER" id="PTHR22976">
    <property type="entry name" value="BIOTIN SYNTHASE"/>
    <property type="match status" value="1"/>
</dbReference>
<dbReference type="PANTHER" id="PTHR22976:SF2">
    <property type="entry name" value="BIOTIN SYNTHASE, MITOCHONDRIAL"/>
    <property type="match status" value="1"/>
</dbReference>
<dbReference type="Pfam" id="PF06968">
    <property type="entry name" value="BATS"/>
    <property type="match status" value="1"/>
</dbReference>
<dbReference type="Pfam" id="PF04055">
    <property type="entry name" value="Radical_SAM"/>
    <property type="match status" value="1"/>
</dbReference>
<dbReference type="PIRSF" id="PIRSF001619">
    <property type="entry name" value="Biotin_synth"/>
    <property type="match status" value="1"/>
</dbReference>
<dbReference type="SFLD" id="SFLDF00272">
    <property type="entry name" value="biotin_synthase"/>
    <property type="match status" value="1"/>
</dbReference>
<dbReference type="SFLD" id="SFLDS00029">
    <property type="entry name" value="Radical_SAM"/>
    <property type="match status" value="1"/>
</dbReference>
<dbReference type="SMART" id="SM00876">
    <property type="entry name" value="BATS"/>
    <property type="match status" value="1"/>
</dbReference>
<dbReference type="SMART" id="SM00729">
    <property type="entry name" value="Elp3"/>
    <property type="match status" value="1"/>
</dbReference>
<dbReference type="SUPFAM" id="SSF102114">
    <property type="entry name" value="Radical SAM enzymes"/>
    <property type="match status" value="1"/>
</dbReference>
<dbReference type="PROSITE" id="PS51918">
    <property type="entry name" value="RADICAL_SAM"/>
    <property type="match status" value="1"/>
</dbReference>
<accession>Q8EDK6</accession>
<keyword id="KW-0001">2Fe-2S</keyword>
<keyword id="KW-0004">4Fe-4S</keyword>
<keyword id="KW-0093">Biotin biosynthesis</keyword>
<keyword id="KW-0408">Iron</keyword>
<keyword id="KW-0411">Iron-sulfur</keyword>
<keyword id="KW-0479">Metal-binding</keyword>
<keyword id="KW-1185">Reference proteome</keyword>
<keyword id="KW-0949">S-adenosyl-L-methionine</keyword>
<keyword id="KW-0808">Transferase</keyword>
<reference key="1">
    <citation type="journal article" date="2002" name="Nat. Biotechnol.">
        <title>Genome sequence of the dissimilatory metal ion-reducing bacterium Shewanella oneidensis.</title>
        <authorList>
            <person name="Heidelberg J.F."/>
            <person name="Paulsen I.T."/>
            <person name="Nelson K.E."/>
            <person name="Gaidos E.J."/>
            <person name="Nelson W.C."/>
            <person name="Read T.D."/>
            <person name="Eisen J.A."/>
            <person name="Seshadri R."/>
            <person name="Ward N.L."/>
            <person name="Methe B.A."/>
            <person name="Clayton R.A."/>
            <person name="Meyer T."/>
            <person name="Tsapin A."/>
            <person name="Scott J."/>
            <person name="Beanan M.J."/>
            <person name="Brinkac L.M."/>
            <person name="Daugherty S.C."/>
            <person name="DeBoy R.T."/>
            <person name="Dodson R.J."/>
            <person name="Durkin A.S."/>
            <person name="Haft D.H."/>
            <person name="Kolonay J.F."/>
            <person name="Madupu R."/>
            <person name="Peterson J.D."/>
            <person name="Umayam L.A."/>
            <person name="White O."/>
            <person name="Wolf A.M."/>
            <person name="Vamathevan J.J."/>
            <person name="Weidman J.F."/>
            <person name="Impraim M."/>
            <person name="Lee K."/>
            <person name="Berry K.J."/>
            <person name="Lee C."/>
            <person name="Mueller J."/>
            <person name="Khouri H.M."/>
            <person name="Gill J."/>
            <person name="Utterback T.R."/>
            <person name="McDonald L.A."/>
            <person name="Feldblyum T.V."/>
            <person name="Smith H.O."/>
            <person name="Venter J.C."/>
            <person name="Nealson K.H."/>
            <person name="Fraser C.M."/>
        </authorList>
    </citation>
    <scope>NUCLEOTIDE SEQUENCE [LARGE SCALE GENOMIC DNA]</scope>
    <source>
        <strain>ATCC 700550 / JCM 31522 / CIP 106686 / LMG 19005 / NCIMB 14063 / MR-1</strain>
    </source>
</reference>
<gene>
    <name evidence="1" type="primary">bioB</name>
    <name type="ordered locus">SO_2740</name>
</gene>
<evidence type="ECO:0000255" key="1">
    <source>
        <dbReference type="HAMAP-Rule" id="MF_01694"/>
    </source>
</evidence>
<evidence type="ECO:0000255" key="2">
    <source>
        <dbReference type="PROSITE-ProRule" id="PRU01266"/>
    </source>
</evidence>
<comment type="function">
    <text evidence="1">Catalyzes the conversion of dethiobiotin (DTB) to biotin by the insertion of a sulfur atom into dethiobiotin via a radical-based mechanism.</text>
</comment>
<comment type="catalytic activity">
    <reaction evidence="1">
        <text>(4R,5S)-dethiobiotin + (sulfur carrier)-SH + 2 reduced [2Fe-2S]-[ferredoxin] + 2 S-adenosyl-L-methionine = (sulfur carrier)-H + biotin + 2 5'-deoxyadenosine + 2 L-methionine + 2 oxidized [2Fe-2S]-[ferredoxin]</text>
        <dbReference type="Rhea" id="RHEA:22060"/>
        <dbReference type="Rhea" id="RHEA-COMP:10000"/>
        <dbReference type="Rhea" id="RHEA-COMP:10001"/>
        <dbReference type="Rhea" id="RHEA-COMP:14737"/>
        <dbReference type="Rhea" id="RHEA-COMP:14739"/>
        <dbReference type="ChEBI" id="CHEBI:17319"/>
        <dbReference type="ChEBI" id="CHEBI:29917"/>
        <dbReference type="ChEBI" id="CHEBI:33737"/>
        <dbReference type="ChEBI" id="CHEBI:33738"/>
        <dbReference type="ChEBI" id="CHEBI:57586"/>
        <dbReference type="ChEBI" id="CHEBI:57844"/>
        <dbReference type="ChEBI" id="CHEBI:59789"/>
        <dbReference type="ChEBI" id="CHEBI:64428"/>
        <dbReference type="ChEBI" id="CHEBI:149473"/>
        <dbReference type="EC" id="2.8.1.6"/>
    </reaction>
</comment>
<comment type="cofactor">
    <cofactor evidence="1">
        <name>[4Fe-4S] cluster</name>
        <dbReference type="ChEBI" id="CHEBI:49883"/>
    </cofactor>
    <text evidence="1">Binds 1 [4Fe-4S] cluster. The cluster is coordinated with 3 cysteines and an exchangeable S-adenosyl-L-methionine.</text>
</comment>
<comment type="cofactor">
    <cofactor evidence="1">
        <name>[2Fe-2S] cluster</name>
        <dbReference type="ChEBI" id="CHEBI:190135"/>
    </cofactor>
    <text evidence="1">Binds 1 [2Fe-2S] cluster. The cluster is coordinated with 3 cysteines and 1 arginine.</text>
</comment>
<comment type="pathway">
    <text evidence="1">Cofactor biosynthesis; biotin biosynthesis; biotin from 7,8-diaminononanoate: step 2/2.</text>
</comment>
<comment type="subunit">
    <text evidence="1">Homodimer.</text>
</comment>
<comment type="similarity">
    <text evidence="1">Belongs to the radical SAM superfamily. Biotin synthase family.</text>
</comment>
<sequence>MSQLQVRHDWKREEIEALFALPMNDLLFKAHSIHREEYDPNEVQISRLLSIKTGACPEDCKYCPQSARYDTGLEKERLLAMETVLTEARSAKAAGASRFCMGAAWRNPKDKDMPYLKQMVQEVKALGMETCMTLGMLSAEQANELAEAGLDYYNHNLDTSPEYYGDVITTRTYQNRLDTLSHVRASGMKVCSGGIVGMGEKATDRAGLLQQLANLPQHPDSVPINMLVKVAGTPFEKLDDLDPLEFVRTIAVARILMPLSRVRLSAGRENMSDELQAMCFFAGANSIFYGCKLLTTPNPEESDDMGLFRRLGLRPEQGAAASIDDEQAVLAKAAAYQDKASAQFYDAAAL</sequence>
<feature type="chain" id="PRO_0000381621" description="Biotin synthase">
    <location>
        <begin position="1"/>
        <end position="350"/>
    </location>
</feature>
<feature type="domain" description="Radical SAM core" evidence="2">
    <location>
        <begin position="41"/>
        <end position="268"/>
    </location>
</feature>
<feature type="binding site" evidence="1">
    <location>
        <position position="56"/>
    </location>
    <ligand>
        <name>[4Fe-4S] cluster</name>
        <dbReference type="ChEBI" id="CHEBI:49883"/>
        <note>4Fe-4S-S-AdoMet</note>
    </ligand>
</feature>
<feature type="binding site" evidence="1">
    <location>
        <position position="60"/>
    </location>
    <ligand>
        <name>[4Fe-4S] cluster</name>
        <dbReference type="ChEBI" id="CHEBI:49883"/>
        <note>4Fe-4S-S-AdoMet</note>
    </ligand>
</feature>
<feature type="binding site" evidence="1">
    <location>
        <position position="63"/>
    </location>
    <ligand>
        <name>[4Fe-4S] cluster</name>
        <dbReference type="ChEBI" id="CHEBI:49883"/>
        <note>4Fe-4S-S-AdoMet</note>
    </ligand>
</feature>
<feature type="binding site" evidence="1">
    <location>
        <position position="100"/>
    </location>
    <ligand>
        <name>[2Fe-2S] cluster</name>
        <dbReference type="ChEBI" id="CHEBI:190135"/>
    </ligand>
</feature>
<feature type="binding site" evidence="1">
    <location>
        <position position="131"/>
    </location>
    <ligand>
        <name>[2Fe-2S] cluster</name>
        <dbReference type="ChEBI" id="CHEBI:190135"/>
    </ligand>
</feature>
<feature type="binding site" evidence="1">
    <location>
        <position position="191"/>
    </location>
    <ligand>
        <name>[2Fe-2S] cluster</name>
        <dbReference type="ChEBI" id="CHEBI:190135"/>
    </ligand>
</feature>
<feature type="binding site" evidence="1">
    <location>
        <position position="263"/>
    </location>
    <ligand>
        <name>[2Fe-2S] cluster</name>
        <dbReference type="ChEBI" id="CHEBI:190135"/>
    </ligand>
</feature>
<proteinExistence type="inferred from homology"/>
<organism>
    <name type="scientific">Shewanella oneidensis (strain ATCC 700550 / JCM 31522 / CIP 106686 / LMG 19005 / NCIMB 14063 / MR-1)</name>
    <dbReference type="NCBI Taxonomy" id="211586"/>
    <lineage>
        <taxon>Bacteria</taxon>
        <taxon>Pseudomonadati</taxon>
        <taxon>Pseudomonadota</taxon>
        <taxon>Gammaproteobacteria</taxon>
        <taxon>Alteromonadales</taxon>
        <taxon>Shewanellaceae</taxon>
        <taxon>Shewanella</taxon>
    </lineage>
</organism>
<protein>
    <recommendedName>
        <fullName evidence="1">Biotin synthase</fullName>
        <ecNumber evidence="1">2.8.1.6</ecNumber>
    </recommendedName>
</protein>
<name>BIOB_SHEON</name>